<evidence type="ECO:0000255" key="1">
    <source>
        <dbReference type="HAMAP-Rule" id="MF_01014"/>
    </source>
</evidence>
<accession>Q31E65</accession>
<proteinExistence type="inferred from homology"/>
<reference key="1">
    <citation type="journal article" date="2006" name="PLoS Biol.">
        <title>The genome of deep-sea vent chemolithoautotroph Thiomicrospira crunogena XCL-2.</title>
        <authorList>
            <person name="Scott K.M."/>
            <person name="Sievert S.M."/>
            <person name="Abril F.N."/>
            <person name="Ball L.A."/>
            <person name="Barrett C.J."/>
            <person name="Blake R.A."/>
            <person name="Boller A.J."/>
            <person name="Chain P.S.G."/>
            <person name="Clark J.A."/>
            <person name="Davis C.R."/>
            <person name="Detter C."/>
            <person name="Do K.F."/>
            <person name="Dobrinski K.P."/>
            <person name="Faza B.I."/>
            <person name="Fitzpatrick K.A."/>
            <person name="Freyermuth S.K."/>
            <person name="Harmer T.L."/>
            <person name="Hauser L.J."/>
            <person name="Huegler M."/>
            <person name="Kerfeld C.A."/>
            <person name="Klotz M.G."/>
            <person name="Kong W.W."/>
            <person name="Land M."/>
            <person name="Lapidus A."/>
            <person name="Larimer F.W."/>
            <person name="Longo D.L."/>
            <person name="Lucas S."/>
            <person name="Malfatti S.A."/>
            <person name="Massey S.E."/>
            <person name="Martin D.D."/>
            <person name="McCuddin Z."/>
            <person name="Meyer F."/>
            <person name="Moore J.L."/>
            <person name="Ocampo L.H. Jr."/>
            <person name="Paul J.H."/>
            <person name="Paulsen I.T."/>
            <person name="Reep D.K."/>
            <person name="Ren Q."/>
            <person name="Ross R.L."/>
            <person name="Sato P.Y."/>
            <person name="Thomas P."/>
            <person name="Tinkham L.E."/>
            <person name="Zeruth G.T."/>
        </authorList>
    </citation>
    <scope>NUCLEOTIDE SEQUENCE [LARGE SCALE GENOMIC DNA]</scope>
    <source>
        <strain>DSM 25203 / XCL-2</strain>
    </source>
</reference>
<gene>
    <name evidence="1" type="primary">hisA</name>
    <name type="ordered locus">Tcr_1968</name>
</gene>
<protein>
    <recommendedName>
        <fullName evidence="1">1-(5-phosphoribosyl)-5-[(5-phosphoribosylamino)methylideneamino] imidazole-4-carboxamide isomerase</fullName>
        <ecNumber evidence="1">5.3.1.16</ecNumber>
    </recommendedName>
    <alternativeName>
        <fullName evidence="1">Phosphoribosylformimino-5-aminoimidazole carboxamide ribotide isomerase</fullName>
    </alternativeName>
</protein>
<dbReference type="EC" id="5.3.1.16" evidence="1"/>
<dbReference type="EMBL" id="CP000109">
    <property type="protein sequence ID" value="ABB42558.1"/>
    <property type="molecule type" value="Genomic_DNA"/>
</dbReference>
<dbReference type="SMR" id="Q31E65"/>
<dbReference type="STRING" id="317025.Tcr_1968"/>
<dbReference type="KEGG" id="tcx:Tcr_1968"/>
<dbReference type="eggNOG" id="COG0106">
    <property type="taxonomic scope" value="Bacteria"/>
</dbReference>
<dbReference type="HOGENOM" id="CLU_048577_1_1_6"/>
<dbReference type="OrthoDB" id="9807749at2"/>
<dbReference type="UniPathway" id="UPA00031">
    <property type="reaction ID" value="UER00009"/>
</dbReference>
<dbReference type="GO" id="GO:0005737">
    <property type="term" value="C:cytoplasm"/>
    <property type="evidence" value="ECO:0007669"/>
    <property type="project" value="UniProtKB-SubCell"/>
</dbReference>
<dbReference type="GO" id="GO:0003949">
    <property type="term" value="F:1-(5-phosphoribosyl)-5-[(5-phosphoribosylamino)methylideneamino]imidazole-4-carboxamide isomerase activity"/>
    <property type="evidence" value="ECO:0007669"/>
    <property type="project" value="UniProtKB-UniRule"/>
</dbReference>
<dbReference type="GO" id="GO:0016615">
    <property type="term" value="F:malate dehydrogenase activity"/>
    <property type="evidence" value="ECO:0007669"/>
    <property type="project" value="InterPro"/>
</dbReference>
<dbReference type="GO" id="GO:0000105">
    <property type="term" value="P:L-histidine biosynthetic process"/>
    <property type="evidence" value="ECO:0007669"/>
    <property type="project" value="UniProtKB-UniRule"/>
</dbReference>
<dbReference type="GO" id="GO:0000162">
    <property type="term" value="P:L-tryptophan biosynthetic process"/>
    <property type="evidence" value="ECO:0007669"/>
    <property type="project" value="TreeGrafter"/>
</dbReference>
<dbReference type="GO" id="GO:0006108">
    <property type="term" value="P:malate metabolic process"/>
    <property type="evidence" value="ECO:0007669"/>
    <property type="project" value="InterPro"/>
</dbReference>
<dbReference type="CDD" id="cd04732">
    <property type="entry name" value="HisA"/>
    <property type="match status" value="1"/>
</dbReference>
<dbReference type="FunFam" id="3.20.20.70:FF:000009">
    <property type="entry name" value="1-(5-phosphoribosyl)-5-[(5-phosphoribosylamino)methylideneamino] imidazole-4-carboxamide isomerase"/>
    <property type="match status" value="1"/>
</dbReference>
<dbReference type="Gene3D" id="3.20.20.70">
    <property type="entry name" value="Aldolase class I"/>
    <property type="match status" value="1"/>
</dbReference>
<dbReference type="HAMAP" id="MF_01014">
    <property type="entry name" value="HisA"/>
    <property type="match status" value="1"/>
</dbReference>
<dbReference type="InterPro" id="IPR013785">
    <property type="entry name" value="Aldolase_TIM"/>
</dbReference>
<dbReference type="InterPro" id="IPR006062">
    <property type="entry name" value="His_biosynth"/>
</dbReference>
<dbReference type="InterPro" id="IPR006063">
    <property type="entry name" value="HisA_bact_arch"/>
</dbReference>
<dbReference type="InterPro" id="IPR044524">
    <property type="entry name" value="Isoase_HisA-like"/>
</dbReference>
<dbReference type="InterPro" id="IPR023016">
    <property type="entry name" value="Isoase_HisA-like_bact"/>
</dbReference>
<dbReference type="InterPro" id="IPR001252">
    <property type="entry name" value="Malate_DH_AS"/>
</dbReference>
<dbReference type="InterPro" id="IPR011060">
    <property type="entry name" value="RibuloseP-bd_barrel"/>
</dbReference>
<dbReference type="NCBIfam" id="TIGR00007">
    <property type="entry name" value="1-(5-phosphoribosyl)-5-[(5-phosphoribosylamino)methylideneamino]imidazole-4-carboxamide isomerase"/>
    <property type="match status" value="1"/>
</dbReference>
<dbReference type="PANTHER" id="PTHR43090">
    <property type="entry name" value="1-(5-PHOSPHORIBOSYL)-5-[(5-PHOSPHORIBOSYLAMINO)METHYLIDENEAMINO] IMIDAZOLE-4-CARBOXAMIDE ISOMERASE"/>
    <property type="match status" value="1"/>
</dbReference>
<dbReference type="PANTHER" id="PTHR43090:SF2">
    <property type="entry name" value="1-(5-PHOSPHORIBOSYL)-5-[(5-PHOSPHORIBOSYLAMINO)METHYLIDENEAMINO] IMIDAZOLE-4-CARBOXAMIDE ISOMERASE"/>
    <property type="match status" value="1"/>
</dbReference>
<dbReference type="Pfam" id="PF00977">
    <property type="entry name" value="His_biosynth"/>
    <property type="match status" value="1"/>
</dbReference>
<dbReference type="SUPFAM" id="SSF51366">
    <property type="entry name" value="Ribulose-phoshate binding barrel"/>
    <property type="match status" value="1"/>
</dbReference>
<feature type="chain" id="PRO_0000229091" description="1-(5-phosphoribosyl)-5-[(5-phosphoribosylamino)methylideneamino] imidazole-4-carboxamide isomerase">
    <location>
        <begin position="1"/>
        <end position="246"/>
    </location>
</feature>
<feature type="active site" description="Proton acceptor" evidence="1">
    <location>
        <position position="8"/>
    </location>
</feature>
<feature type="active site" description="Proton donor" evidence="1">
    <location>
        <position position="130"/>
    </location>
</feature>
<sequence>MLLIPAIDLKDGECVRLRQGLMDDATVFSGDIVAMAERWVNQGARRLHMVDLNGAFEGKPVNGDAVYQVREAFPDLPIQIGGGIRDLETIEAYLKAGVSYCIIGTKAVHNPEFVAEACKAFPGHIMVGLDAKEGMVAINGWAEVTDHNVIDLGKQFENDGVEAIIYTDIGRDGMMQGVNIQATQALAKALNIPIIASGGITNLDDIRALATIEKDGVSGAITGRAIYEGSLNFKEGQALSDELSKA</sequence>
<comment type="catalytic activity">
    <reaction evidence="1">
        <text>1-(5-phospho-beta-D-ribosyl)-5-[(5-phospho-beta-D-ribosylamino)methylideneamino]imidazole-4-carboxamide = 5-[(5-phospho-1-deoxy-D-ribulos-1-ylimino)methylamino]-1-(5-phospho-beta-D-ribosyl)imidazole-4-carboxamide</text>
        <dbReference type="Rhea" id="RHEA:15469"/>
        <dbReference type="ChEBI" id="CHEBI:58435"/>
        <dbReference type="ChEBI" id="CHEBI:58525"/>
        <dbReference type="EC" id="5.3.1.16"/>
    </reaction>
</comment>
<comment type="pathway">
    <text evidence="1">Amino-acid biosynthesis; L-histidine biosynthesis; L-histidine from 5-phospho-alpha-D-ribose 1-diphosphate: step 4/9.</text>
</comment>
<comment type="subcellular location">
    <subcellularLocation>
        <location evidence="1">Cytoplasm</location>
    </subcellularLocation>
</comment>
<comment type="similarity">
    <text evidence="1">Belongs to the HisA/HisF family.</text>
</comment>
<organism>
    <name type="scientific">Hydrogenovibrio crunogenus (strain DSM 25203 / XCL-2)</name>
    <name type="common">Thiomicrospira crunogena</name>
    <dbReference type="NCBI Taxonomy" id="317025"/>
    <lineage>
        <taxon>Bacteria</taxon>
        <taxon>Pseudomonadati</taxon>
        <taxon>Pseudomonadota</taxon>
        <taxon>Gammaproteobacteria</taxon>
        <taxon>Thiotrichales</taxon>
        <taxon>Piscirickettsiaceae</taxon>
        <taxon>Hydrogenovibrio</taxon>
    </lineage>
</organism>
<keyword id="KW-0028">Amino-acid biosynthesis</keyword>
<keyword id="KW-0963">Cytoplasm</keyword>
<keyword id="KW-0368">Histidine biosynthesis</keyword>
<keyword id="KW-0413">Isomerase</keyword>
<name>HIS4_HYDCU</name>